<gene>
    <name evidence="1" type="primary">rplS</name>
    <name type="ordered locus">PA3742</name>
</gene>
<dbReference type="EMBL" id="AE004091">
    <property type="protein sequence ID" value="AAG07129.1"/>
    <property type="molecule type" value="Genomic_DNA"/>
</dbReference>
<dbReference type="PIR" id="B83178">
    <property type="entry name" value="B83178"/>
</dbReference>
<dbReference type="RefSeq" id="NP_252431.1">
    <property type="nucleotide sequence ID" value="NC_002516.2"/>
</dbReference>
<dbReference type="RefSeq" id="WP_003092637.1">
    <property type="nucleotide sequence ID" value="NZ_QZGE01000001.1"/>
</dbReference>
<dbReference type="PDB" id="7UNR">
    <property type="method" value="EM"/>
    <property type="resolution" value="2.90 A"/>
    <property type="chains" value="R=1-116"/>
</dbReference>
<dbReference type="PDB" id="7UNU">
    <property type="method" value="EM"/>
    <property type="resolution" value="2.90 A"/>
    <property type="chains" value="R=1-116"/>
</dbReference>
<dbReference type="PDB" id="7UNV">
    <property type="method" value="EM"/>
    <property type="resolution" value="2.70 A"/>
    <property type="chains" value="R=1-116"/>
</dbReference>
<dbReference type="PDB" id="7UNW">
    <property type="method" value="EM"/>
    <property type="resolution" value="2.60 A"/>
    <property type="chains" value="R=1-116"/>
</dbReference>
<dbReference type="PDB" id="8CD1">
    <property type="method" value="EM"/>
    <property type="resolution" value="3.00 A"/>
    <property type="chains" value="P=1-116"/>
</dbReference>
<dbReference type="PDB" id="8RWG">
    <property type="method" value="EM"/>
    <property type="resolution" value="2.46 A"/>
    <property type="chains" value="P=1-116"/>
</dbReference>
<dbReference type="PDBsum" id="7UNR"/>
<dbReference type="PDBsum" id="7UNU"/>
<dbReference type="PDBsum" id="7UNV"/>
<dbReference type="PDBsum" id="7UNW"/>
<dbReference type="PDBsum" id="8CD1"/>
<dbReference type="PDBsum" id="8RWG"/>
<dbReference type="EMDB" id="EMD-16566"/>
<dbReference type="EMDB" id="EMD-19547"/>
<dbReference type="EMDB" id="EMD-26630"/>
<dbReference type="EMDB" id="EMD-26633"/>
<dbReference type="EMDB" id="EMD-26634"/>
<dbReference type="EMDB" id="EMD-26635"/>
<dbReference type="SMR" id="Q9HXQ2"/>
<dbReference type="FunCoup" id="Q9HXQ2">
    <property type="interactions" value="900"/>
</dbReference>
<dbReference type="STRING" id="208964.PA3742"/>
<dbReference type="PaxDb" id="208964-PA3742"/>
<dbReference type="DNASU" id="880339"/>
<dbReference type="GeneID" id="77219764"/>
<dbReference type="GeneID" id="880339"/>
<dbReference type="KEGG" id="pae:PA3742"/>
<dbReference type="PATRIC" id="fig|208964.12.peg.3914"/>
<dbReference type="PseudoCAP" id="PA3742"/>
<dbReference type="HOGENOM" id="CLU_103507_2_1_6"/>
<dbReference type="InParanoid" id="Q9HXQ2"/>
<dbReference type="OrthoDB" id="9803541at2"/>
<dbReference type="PhylomeDB" id="Q9HXQ2"/>
<dbReference type="BioCyc" id="PAER208964:G1FZ6-3813-MONOMER"/>
<dbReference type="PRO" id="PR:Q9HXQ2"/>
<dbReference type="Proteomes" id="UP000002438">
    <property type="component" value="Chromosome"/>
</dbReference>
<dbReference type="GO" id="GO:0022625">
    <property type="term" value="C:cytosolic large ribosomal subunit"/>
    <property type="evidence" value="ECO:0000318"/>
    <property type="project" value="GO_Central"/>
</dbReference>
<dbReference type="GO" id="GO:0003735">
    <property type="term" value="F:structural constituent of ribosome"/>
    <property type="evidence" value="ECO:0000318"/>
    <property type="project" value="GO_Central"/>
</dbReference>
<dbReference type="GO" id="GO:0006412">
    <property type="term" value="P:translation"/>
    <property type="evidence" value="ECO:0007669"/>
    <property type="project" value="UniProtKB-UniRule"/>
</dbReference>
<dbReference type="FunFam" id="2.30.30.790:FF:000001">
    <property type="entry name" value="50S ribosomal protein L19"/>
    <property type="match status" value="1"/>
</dbReference>
<dbReference type="Gene3D" id="2.30.30.790">
    <property type="match status" value="1"/>
</dbReference>
<dbReference type="HAMAP" id="MF_00402">
    <property type="entry name" value="Ribosomal_bL19"/>
    <property type="match status" value="1"/>
</dbReference>
<dbReference type="InterPro" id="IPR001857">
    <property type="entry name" value="Ribosomal_bL19"/>
</dbReference>
<dbReference type="InterPro" id="IPR018257">
    <property type="entry name" value="Ribosomal_bL19_CS"/>
</dbReference>
<dbReference type="InterPro" id="IPR038657">
    <property type="entry name" value="Ribosomal_bL19_sf"/>
</dbReference>
<dbReference type="InterPro" id="IPR008991">
    <property type="entry name" value="Translation_prot_SH3-like_sf"/>
</dbReference>
<dbReference type="NCBIfam" id="TIGR01024">
    <property type="entry name" value="rplS_bact"/>
    <property type="match status" value="1"/>
</dbReference>
<dbReference type="PANTHER" id="PTHR15680:SF9">
    <property type="entry name" value="LARGE RIBOSOMAL SUBUNIT PROTEIN BL19M"/>
    <property type="match status" value="1"/>
</dbReference>
<dbReference type="PANTHER" id="PTHR15680">
    <property type="entry name" value="RIBOSOMAL PROTEIN L19"/>
    <property type="match status" value="1"/>
</dbReference>
<dbReference type="Pfam" id="PF01245">
    <property type="entry name" value="Ribosomal_L19"/>
    <property type="match status" value="1"/>
</dbReference>
<dbReference type="PIRSF" id="PIRSF002191">
    <property type="entry name" value="Ribosomal_L19"/>
    <property type="match status" value="1"/>
</dbReference>
<dbReference type="PRINTS" id="PR00061">
    <property type="entry name" value="RIBOSOMALL19"/>
</dbReference>
<dbReference type="SUPFAM" id="SSF50104">
    <property type="entry name" value="Translation proteins SH3-like domain"/>
    <property type="match status" value="1"/>
</dbReference>
<dbReference type="PROSITE" id="PS01015">
    <property type="entry name" value="RIBOSOMAL_L19"/>
    <property type="match status" value="1"/>
</dbReference>
<comment type="function">
    <text evidence="1">This protein is located at the 30S-50S ribosomal subunit interface and may play a role in the structure and function of the aminoacyl-tRNA binding site.</text>
</comment>
<comment type="similarity">
    <text evidence="1">Belongs to the bacterial ribosomal protein bL19 family.</text>
</comment>
<evidence type="ECO:0000255" key="1">
    <source>
        <dbReference type="HAMAP-Rule" id="MF_00402"/>
    </source>
</evidence>
<evidence type="ECO:0000305" key="2"/>
<proteinExistence type="evidence at protein level"/>
<keyword id="KW-0002">3D-structure</keyword>
<keyword id="KW-1185">Reference proteome</keyword>
<keyword id="KW-0687">Ribonucleoprotein</keyword>
<keyword id="KW-0689">Ribosomal protein</keyword>
<name>RL19_PSEAE</name>
<accession>Q9HXQ2</accession>
<feature type="chain" id="PRO_0000163510" description="Large ribosomal subunit protein bL19">
    <location>
        <begin position="1"/>
        <end position="116"/>
    </location>
</feature>
<reference key="1">
    <citation type="journal article" date="2000" name="Nature">
        <title>Complete genome sequence of Pseudomonas aeruginosa PAO1, an opportunistic pathogen.</title>
        <authorList>
            <person name="Stover C.K."/>
            <person name="Pham X.-Q.T."/>
            <person name="Erwin A.L."/>
            <person name="Mizoguchi S.D."/>
            <person name="Warrener P."/>
            <person name="Hickey M.J."/>
            <person name="Brinkman F.S.L."/>
            <person name="Hufnagle W.O."/>
            <person name="Kowalik D.J."/>
            <person name="Lagrou M."/>
            <person name="Garber R.L."/>
            <person name="Goltry L."/>
            <person name="Tolentino E."/>
            <person name="Westbrock-Wadman S."/>
            <person name="Yuan Y."/>
            <person name="Brody L.L."/>
            <person name="Coulter S.N."/>
            <person name="Folger K.R."/>
            <person name="Kas A."/>
            <person name="Larbig K."/>
            <person name="Lim R.M."/>
            <person name="Smith K.A."/>
            <person name="Spencer D.H."/>
            <person name="Wong G.K.-S."/>
            <person name="Wu Z."/>
            <person name="Paulsen I.T."/>
            <person name="Reizer J."/>
            <person name="Saier M.H. Jr."/>
            <person name="Hancock R.E.W."/>
            <person name="Lory S."/>
            <person name="Olson M.V."/>
        </authorList>
    </citation>
    <scope>NUCLEOTIDE SEQUENCE [LARGE SCALE GENOMIC DNA]</scope>
    <source>
        <strain>ATCC 15692 / DSM 22644 / CIP 104116 / JCM 14847 / LMG 12228 / 1C / PRS 101 / PAO1</strain>
    </source>
</reference>
<sequence>MTNKIIQQIEAEQMNKEIPAFAPGDTVIVQVKVKEGDRQRLQAFEGVVIAKRNRGLNSAFTVRKISNGVGVERTFQTYSPIVDSLSVKRRGDVRKAKLYYLRALSGKAARIKEKLV</sequence>
<protein>
    <recommendedName>
        <fullName evidence="1">Large ribosomal subunit protein bL19</fullName>
    </recommendedName>
    <alternativeName>
        <fullName evidence="2">50S ribosomal protein L19</fullName>
    </alternativeName>
</protein>
<organism>
    <name type="scientific">Pseudomonas aeruginosa (strain ATCC 15692 / DSM 22644 / CIP 104116 / JCM 14847 / LMG 12228 / 1C / PRS 101 / PAO1)</name>
    <dbReference type="NCBI Taxonomy" id="208964"/>
    <lineage>
        <taxon>Bacteria</taxon>
        <taxon>Pseudomonadati</taxon>
        <taxon>Pseudomonadota</taxon>
        <taxon>Gammaproteobacteria</taxon>
        <taxon>Pseudomonadales</taxon>
        <taxon>Pseudomonadaceae</taxon>
        <taxon>Pseudomonas</taxon>
    </lineage>
</organism>